<name>HDA_YERPE</name>
<gene>
    <name evidence="2" type="primary">hda</name>
    <name type="synonym">dnaA1</name>
    <name type="ordered locus">YPO3071</name>
    <name type="ordered locus">y1410</name>
    <name type="ordered locus">YP_2693</name>
</gene>
<evidence type="ECO:0000250" key="1"/>
<evidence type="ECO:0000255" key="2">
    <source>
        <dbReference type="HAMAP-Rule" id="MF_01158"/>
    </source>
</evidence>
<reference key="1">
    <citation type="journal article" date="2001" name="Nature">
        <title>Genome sequence of Yersinia pestis, the causative agent of plague.</title>
        <authorList>
            <person name="Parkhill J."/>
            <person name="Wren B.W."/>
            <person name="Thomson N.R."/>
            <person name="Titball R.W."/>
            <person name="Holden M.T.G."/>
            <person name="Prentice M.B."/>
            <person name="Sebaihia M."/>
            <person name="James K.D."/>
            <person name="Churcher C.M."/>
            <person name="Mungall K.L."/>
            <person name="Baker S."/>
            <person name="Basham D."/>
            <person name="Bentley S.D."/>
            <person name="Brooks K."/>
            <person name="Cerdeno-Tarraga A.-M."/>
            <person name="Chillingworth T."/>
            <person name="Cronin A."/>
            <person name="Davies R.M."/>
            <person name="Davis P."/>
            <person name="Dougan G."/>
            <person name="Feltwell T."/>
            <person name="Hamlin N."/>
            <person name="Holroyd S."/>
            <person name="Jagels K."/>
            <person name="Karlyshev A.V."/>
            <person name="Leather S."/>
            <person name="Moule S."/>
            <person name="Oyston P.C.F."/>
            <person name="Quail M.A."/>
            <person name="Rutherford K.M."/>
            <person name="Simmonds M."/>
            <person name="Skelton J."/>
            <person name="Stevens K."/>
            <person name="Whitehead S."/>
            <person name="Barrell B.G."/>
        </authorList>
    </citation>
    <scope>NUCLEOTIDE SEQUENCE [LARGE SCALE GENOMIC DNA]</scope>
    <source>
        <strain>CO-92 / Biovar Orientalis</strain>
    </source>
</reference>
<reference key="2">
    <citation type="journal article" date="2002" name="J. Bacteriol.">
        <title>Genome sequence of Yersinia pestis KIM.</title>
        <authorList>
            <person name="Deng W."/>
            <person name="Burland V."/>
            <person name="Plunkett G. III"/>
            <person name="Boutin A."/>
            <person name="Mayhew G.F."/>
            <person name="Liss P."/>
            <person name="Perna N.T."/>
            <person name="Rose D.J."/>
            <person name="Mau B."/>
            <person name="Zhou S."/>
            <person name="Schwartz D.C."/>
            <person name="Fetherston J.D."/>
            <person name="Lindler L.E."/>
            <person name="Brubaker R.R."/>
            <person name="Plano G.V."/>
            <person name="Straley S.C."/>
            <person name="McDonough K.A."/>
            <person name="Nilles M.L."/>
            <person name="Matson J.S."/>
            <person name="Blattner F.R."/>
            <person name="Perry R.D."/>
        </authorList>
    </citation>
    <scope>NUCLEOTIDE SEQUENCE [LARGE SCALE GENOMIC DNA]</scope>
    <source>
        <strain>KIM10+ / Biovar Mediaevalis</strain>
    </source>
</reference>
<reference key="3">
    <citation type="journal article" date="2004" name="DNA Res.">
        <title>Complete genome sequence of Yersinia pestis strain 91001, an isolate avirulent to humans.</title>
        <authorList>
            <person name="Song Y."/>
            <person name="Tong Z."/>
            <person name="Wang J."/>
            <person name="Wang L."/>
            <person name="Guo Z."/>
            <person name="Han Y."/>
            <person name="Zhang J."/>
            <person name="Pei D."/>
            <person name="Zhou D."/>
            <person name="Qin H."/>
            <person name="Pang X."/>
            <person name="Han Y."/>
            <person name="Zhai J."/>
            <person name="Li M."/>
            <person name="Cui B."/>
            <person name="Qi Z."/>
            <person name="Jin L."/>
            <person name="Dai R."/>
            <person name="Chen F."/>
            <person name="Li S."/>
            <person name="Ye C."/>
            <person name="Du Z."/>
            <person name="Lin W."/>
            <person name="Wang J."/>
            <person name="Yu J."/>
            <person name="Yang H."/>
            <person name="Wang J."/>
            <person name="Huang P."/>
            <person name="Yang R."/>
        </authorList>
    </citation>
    <scope>NUCLEOTIDE SEQUENCE [LARGE SCALE GENOMIC DNA]</scope>
    <source>
        <strain>91001 / Biovar Mediaevalis</strain>
    </source>
</reference>
<sequence length="239" mass="27143">MLVEVLLNTPAQLSLPLYLPDDETFASFYPGENPSLLAAIQSAVHQPHGSYIYFWSREGGGRSHLLHAACAELSQQGEAVGYVPLDKRAYFIPEVLEGMEQLALVCIDNIECIAGDEQWEMAMFNLYNRIVETGRTRLLITGDRPPRQLNLGLPDLASRLDWGQIYKLQPLSDDEKLQALQLRAKLRGFELPEDVGRFLLKRLDREMRTLFMTLDQLDRASITAQRKLTIPFVKEILSL</sequence>
<protein>
    <recommendedName>
        <fullName evidence="2">DnaA regulatory inactivator Hda</fullName>
    </recommendedName>
</protein>
<proteinExistence type="inferred from homology"/>
<keyword id="KW-0235">DNA replication</keyword>
<keyword id="KW-0236">DNA replication inhibitor</keyword>
<keyword id="KW-1185">Reference proteome</keyword>
<comment type="function">
    <text evidence="1">Mediates the interaction of DNA replication initiator protein DnaA with DNA polymerase subunit beta sliding clamp (dnaN). Stimulates hydrolysis of ATP-DnaA to ADP-DnaA, rendering DnaA inactive for reinitiation, a process called regulatory inhibition of DnaA or RIDA (By similarity).</text>
</comment>
<comment type="subunit">
    <text evidence="2">The active form seems to be an ADP-bound monomer. Forms the RIDA complex (regulatory inactivation of DnaA) of ATP-DnaA, ADP-Hda and the DNA-loaded beta sliding clamp (dnaN).</text>
</comment>
<comment type="similarity">
    <text evidence="2">Belongs to the DnaA family. HdA subfamily.</text>
</comment>
<accession>Q8ZCC1</accession>
<accession>Q0WCJ7</accession>
<accession>Q74SC4</accession>
<accession>Q7CJJ7</accession>
<dbReference type="EMBL" id="AL590842">
    <property type="protein sequence ID" value="CAL21673.1"/>
    <property type="molecule type" value="Genomic_DNA"/>
</dbReference>
<dbReference type="EMBL" id="AE009952">
    <property type="protein sequence ID" value="AAM84982.1"/>
    <property type="molecule type" value="Genomic_DNA"/>
</dbReference>
<dbReference type="EMBL" id="AE017042">
    <property type="protein sequence ID" value="AAS62883.1"/>
    <property type="molecule type" value="Genomic_DNA"/>
</dbReference>
<dbReference type="PIR" id="AF0373">
    <property type="entry name" value="AF0373"/>
</dbReference>
<dbReference type="RefSeq" id="YP_002347991.1">
    <property type="nucleotide sequence ID" value="NC_003143.1"/>
</dbReference>
<dbReference type="SMR" id="Q8ZCC1"/>
<dbReference type="STRING" id="214092.YPO3071"/>
<dbReference type="PaxDb" id="214092-YPO3071"/>
<dbReference type="DNASU" id="1146357"/>
<dbReference type="EnsemblBacteria" id="AAS62883">
    <property type="protein sequence ID" value="AAS62883"/>
    <property type="gene ID" value="YP_2693"/>
</dbReference>
<dbReference type="KEGG" id="ype:YPO3071"/>
<dbReference type="KEGG" id="ypk:y1410"/>
<dbReference type="KEGG" id="ypm:YP_2693"/>
<dbReference type="PATRIC" id="fig|1028802.3.peg.1589"/>
<dbReference type="eggNOG" id="COG0593">
    <property type="taxonomic scope" value="Bacteria"/>
</dbReference>
<dbReference type="HOGENOM" id="CLU_072265_1_1_6"/>
<dbReference type="OMA" id="DWGQIYR"/>
<dbReference type="OrthoDB" id="9784878at2"/>
<dbReference type="Proteomes" id="UP000000815">
    <property type="component" value="Chromosome"/>
</dbReference>
<dbReference type="Proteomes" id="UP000001019">
    <property type="component" value="Chromosome"/>
</dbReference>
<dbReference type="Proteomes" id="UP000002490">
    <property type="component" value="Chromosome"/>
</dbReference>
<dbReference type="GO" id="GO:0006260">
    <property type="term" value="P:DNA replication"/>
    <property type="evidence" value="ECO:0000318"/>
    <property type="project" value="GO_Central"/>
</dbReference>
<dbReference type="GO" id="GO:0006270">
    <property type="term" value="P:DNA replication initiation"/>
    <property type="evidence" value="ECO:0000318"/>
    <property type="project" value="GO_Central"/>
</dbReference>
<dbReference type="GO" id="GO:0032297">
    <property type="term" value="P:negative regulation of DNA-templated DNA replication initiation"/>
    <property type="evidence" value="ECO:0000318"/>
    <property type="project" value="GO_Central"/>
</dbReference>
<dbReference type="FunFam" id="1.10.8.60:FF:000024">
    <property type="entry name" value="DnaA regulatory inactivator Hda"/>
    <property type="match status" value="1"/>
</dbReference>
<dbReference type="FunFam" id="3.40.50.300:FF:000452">
    <property type="entry name" value="DnaA regulatory inactivator Hda"/>
    <property type="match status" value="1"/>
</dbReference>
<dbReference type="Gene3D" id="1.10.8.60">
    <property type="match status" value="1"/>
</dbReference>
<dbReference type="Gene3D" id="3.40.50.300">
    <property type="entry name" value="P-loop containing nucleotide triphosphate hydrolases"/>
    <property type="match status" value="1"/>
</dbReference>
<dbReference type="HAMAP" id="MF_01158">
    <property type="entry name" value="Hda"/>
    <property type="match status" value="1"/>
</dbReference>
<dbReference type="InterPro" id="IPR020591">
    <property type="entry name" value="Chromosome_initiator_DnaA-like"/>
</dbReference>
<dbReference type="InterPro" id="IPR013317">
    <property type="entry name" value="DnaA_dom"/>
</dbReference>
<dbReference type="InterPro" id="IPR017788">
    <property type="entry name" value="Hda"/>
</dbReference>
<dbReference type="InterPro" id="IPR022864">
    <property type="entry name" value="Hda_Enterobact"/>
</dbReference>
<dbReference type="InterPro" id="IPR055199">
    <property type="entry name" value="Hda_lid"/>
</dbReference>
<dbReference type="InterPro" id="IPR027417">
    <property type="entry name" value="P-loop_NTPase"/>
</dbReference>
<dbReference type="NCBIfam" id="TIGR03420">
    <property type="entry name" value="DnaA_homol_Hda"/>
    <property type="match status" value="1"/>
</dbReference>
<dbReference type="NCBIfam" id="NF005982">
    <property type="entry name" value="PRK08084.1"/>
    <property type="match status" value="1"/>
</dbReference>
<dbReference type="PANTHER" id="PTHR30050">
    <property type="entry name" value="CHROMOSOMAL REPLICATION INITIATOR PROTEIN DNAA"/>
    <property type="match status" value="1"/>
</dbReference>
<dbReference type="PANTHER" id="PTHR30050:SF5">
    <property type="entry name" value="DNAA REGULATORY INACTIVATOR HDA"/>
    <property type="match status" value="1"/>
</dbReference>
<dbReference type="Pfam" id="PF00308">
    <property type="entry name" value="Bac_DnaA"/>
    <property type="match status" value="1"/>
</dbReference>
<dbReference type="Pfam" id="PF22688">
    <property type="entry name" value="Hda_lid"/>
    <property type="match status" value="1"/>
</dbReference>
<dbReference type="PRINTS" id="PR00051">
    <property type="entry name" value="DNAA"/>
</dbReference>
<dbReference type="SUPFAM" id="SSF52540">
    <property type="entry name" value="P-loop containing nucleoside triphosphate hydrolases"/>
    <property type="match status" value="1"/>
</dbReference>
<feature type="chain" id="PRO_0000114322" description="DnaA regulatory inactivator Hda">
    <location>
        <begin position="1"/>
        <end position="239"/>
    </location>
</feature>
<organism>
    <name type="scientific">Yersinia pestis</name>
    <dbReference type="NCBI Taxonomy" id="632"/>
    <lineage>
        <taxon>Bacteria</taxon>
        <taxon>Pseudomonadati</taxon>
        <taxon>Pseudomonadota</taxon>
        <taxon>Gammaproteobacteria</taxon>
        <taxon>Enterobacterales</taxon>
        <taxon>Yersiniaceae</taxon>
        <taxon>Yersinia</taxon>
    </lineage>
</organism>